<gene>
    <name evidence="1" type="primary">uvrB</name>
    <name type="ordered locus">TC_0875</name>
</gene>
<feature type="chain" id="PRO_0000138385" description="UvrABC system protein B">
    <location>
        <begin position="1"/>
        <end position="676"/>
    </location>
</feature>
<feature type="domain" description="Helicase ATP-binding" evidence="1">
    <location>
        <begin position="39"/>
        <end position="424"/>
    </location>
</feature>
<feature type="domain" description="Helicase C-terminal" evidence="1">
    <location>
        <begin position="441"/>
        <end position="604"/>
    </location>
</feature>
<feature type="domain" description="UVR" evidence="1">
    <location>
        <begin position="629"/>
        <end position="664"/>
    </location>
</feature>
<feature type="region of interest" description="Disordered" evidence="2">
    <location>
        <begin position="611"/>
        <end position="631"/>
    </location>
</feature>
<feature type="short sequence motif" description="Beta-hairpin">
    <location>
        <begin position="105"/>
        <end position="128"/>
    </location>
</feature>
<feature type="binding site" evidence="1">
    <location>
        <begin position="52"/>
        <end position="59"/>
    </location>
    <ligand>
        <name>ATP</name>
        <dbReference type="ChEBI" id="CHEBI:30616"/>
    </ligand>
</feature>
<accession>Q9PJF4</accession>
<reference key="1">
    <citation type="journal article" date="2000" name="Nucleic Acids Res.">
        <title>Genome sequences of Chlamydia trachomatis MoPn and Chlamydia pneumoniae AR39.</title>
        <authorList>
            <person name="Read T.D."/>
            <person name="Brunham R.C."/>
            <person name="Shen C."/>
            <person name="Gill S.R."/>
            <person name="Heidelberg J.F."/>
            <person name="White O."/>
            <person name="Hickey E.K."/>
            <person name="Peterson J.D."/>
            <person name="Utterback T.R."/>
            <person name="Berry K.J."/>
            <person name="Bass S."/>
            <person name="Linher K.D."/>
            <person name="Weidman J.F."/>
            <person name="Khouri H.M."/>
            <person name="Craven B."/>
            <person name="Bowman C."/>
            <person name="Dodson R.J."/>
            <person name="Gwinn M.L."/>
            <person name="Nelson W.C."/>
            <person name="DeBoy R.T."/>
            <person name="Kolonay J.F."/>
            <person name="McClarty G."/>
            <person name="Salzberg S.L."/>
            <person name="Eisen J.A."/>
            <person name="Fraser C.M."/>
        </authorList>
    </citation>
    <scope>NUCLEOTIDE SEQUENCE [LARGE SCALE GENOMIC DNA]</scope>
    <source>
        <strain>MoPn / Nigg</strain>
    </source>
</reference>
<keyword id="KW-0067">ATP-binding</keyword>
<keyword id="KW-0963">Cytoplasm</keyword>
<keyword id="KW-0227">DNA damage</keyword>
<keyword id="KW-0228">DNA excision</keyword>
<keyword id="KW-0234">DNA repair</keyword>
<keyword id="KW-0267">Excision nuclease</keyword>
<keyword id="KW-0547">Nucleotide-binding</keyword>
<keyword id="KW-0742">SOS response</keyword>
<name>UVRB_CHLMU</name>
<protein>
    <recommendedName>
        <fullName evidence="1">UvrABC system protein B</fullName>
        <shortName evidence="1">Protein UvrB</shortName>
    </recommendedName>
    <alternativeName>
        <fullName evidence="1">Excinuclease ABC subunit B</fullName>
    </alternativeName>
</protein>
<organism>
    <name type="scientific">Chlamydia muridarum (strain MoPn / Nigg)</name>
    <dbReference type="NCBI Taxonomy" id="243161"/>
    <lineage>
        <taxon>Bacteria</taxon>
        <taxon>Pseudomonadati</taxon>
        <taxon>Chlamydiota</taxon>
        <taxon>Chlamydiia</taxon>
        <taxon>Chlamydiales</taxon>
        <taxon>Chlamydiaceae</taxon>
        <taxon>Chlamydia/Chlamydophila group</taxon>
        <taxon>Chlamydia</taxon>
    </lineage>
</organism>
<dbReference type="EMBL" id="AE002160">
    <property type="protein sequence ID" value="AAF39671.1"/>
    <property type="molecule type" value="Genomic_DNA"/>
</dbReference>
<dbReference type="PIR" id="D81654">
    <property type="entry name" value="D81654"/>
</dbReference>
<dbReference type="RefSeq" id="WP_010231819.1">
    <property type="nucleotide sequence ID" value="NZ_CP063055.1"/>
</dbReference>
<dbReference type="SMR" id="Q9PJF4"/>
<dbReference type="GeneID" id="1246243"/>
<dbReference type="KEGG" id="cmu:TC_0875"/>
<dbReference type="PATRIC" id="fig|243161.6.peg.937"/>
<dbReference type="eggNOG" id="COG0556">
    <property type="taxonomic scope" value="Bacteria"/>
</dbReference>
<dbReference type="HOGENOM" id="CLU_009621_2_1_0"/>
<dbReference type="OrthoDB" id="9806651at2"/>
<dbReference type="Proteomes" id="UP000000800">
    <property type="component" value="Chromosome"/>
</dbReference>
<dbReference type="GO" id="GO:0005737">
    <property type="term" value="C:cytoplasm"/>
    <property type="evidence" value="ECO:0007669"/>
    <property type="project" value="UniProtKB-SubCell"/>
</dbReference>
<dbReference type="GO" id="GO:0009380">
    <property type="term" value="C:excinuclease repair complex"/>
    <property type="evidence" value="ECO:0007669"/>
    <property type="project" value="InterPro"/>
</dbReference>
<dbReference type="GO" id="GO:0005524">
    <property type="term" value="F:ATP binding"/>
    <property type="evidence" value="ECO:0007669"/>
    <property type="project" value="UniProtKB-UniRule"/>
</dbReference>
<dbReference type="GO" id="GO:0016887">
    <property type="term" value="F:ATP hydrolysis activity"/>
    <property type="evidence" value="ECO:0007669"/>
    <property type="project" value="InterPro"/>
</dbReference>
<dbReference type="GO" id="GO:0003677">
    <property type="term" value="F:DNA binding"/>
    <property type="evidence" value="ECO:0007669"/>
    <property type="project" value="UniProtKB-UniRule"/>
</dbReference>
<dbReference type="GO" id="GO:0009381">
    <property type="term" value="F:excinuclease ABC activity"/>
    <property type="evidence" value="ECO:0007669"/>
    <property type="project" value="UniProtKB-UniRule"/>
</dbReference>
<dbReference type="GO" id="GO:0006289">
    <property type="term" value="P:nucleotide-excision repair"/>
    <property type="evidence" value="ECO:0007669"/>
    <property type="project" value="UniProtKB-UniRule"/>
</dbReference>
<dbReference type="GO" id="GO:0009432">
    <property type="term" value="P:SOS response"/>
    <property type="evidence" value="ECO:0007669"/>
    <property type="project" value="UniProtKB-UniRule"/>
</dbReference>
<dbReference type="CDD" id="cd17916">
    <property type="entry name" value="DEXHc_UvrB"/>
    <property type="match status" value="1"/>
</dbReference>
<dbReference type="CDD" id="cd18790">
    <property type="entry name" value="SF2_C_UvrB"/>
    <property type="match status" value="1"/>
</dbReference>
<dbReference type="Gene3D" id="3.40.50.300">
    <property type="entry name" value="P-loop containing nucleotide triphosphate hydrolases"/>
    <property type="match status" value="3"/>
</dbReference>
<dbReference type="Gene3D" id="4.10.860.10">
    <property type="entry name" value="UVR domain"/>
    <property type="match status" value="1"/>
</dbReference>
<dbReference type="HAMAP" id="MF_00204">
    <property type="entry name" value="UvrB"/>
    <property type="match status" value="1"/>
</dbReference>
<dbReference type="InterPro" id="IPR006935">
    <property type="entry name" value="Helicase/UvrB_N"/>
</dbReference>
<dbReference type="InterPro" id="IPR014001">
    <property type="entry name" value="Helicase_ATP-bd"/>
</dbReference>
<dbReference type="InterPro" id="IPR001650">
    <property type="entry name" value="Helicase_C-like"/>
</dbReference>
<dbReference type="InterPro" id="IPR027417">
    <property type="entry name" value="P-loop_NTPase"/>
</dbReference>
<dbReference type="InterPro" id="IPR001943">
    <property type="entry name" value="UVR_dom"/>
</dbReference>
<dbReference type="InterPro" id="IPR036876">
    <property type="entry name" value="UVR_dom_sf"/>
</dbReference>
<dbReference type="InterPro" id="IPR004807">
    <property type="entry name" value="UvrB"/>
</dbReference>
<dbReference type="InterPro" id="IPR041471">
    <property type="entry name" value="UvrB_inter"/>
</dbReference>
<dbReference type="InterPro" id="IPR024759">
    <property type="entry name" value="UvrB_YAD/RRR_dom"/>
</dbReference>
<dbReference type="NCBIfam" id="NF003673">
    <property type="entry name" value="PRK05298.1"/>
    <property type="match status" value="1"/>
</dbReference>
<dbReference type="NCBIfam" id="TIGR00631">
    <property type="entry name" value="uvrb"/>
    <property type="match status" value="1"/>
</dbReference>
<dbReference type="PANTHER" id="PTHR24029">
    <property type="entry name" value="UVRABC SYSTEM PROTEIN B"/>
    <property type="match status" value="1"/>
</dbReference>
<dbReference type="PANTHER" id="PTHR24029:SF0">
    <property type="entry name" value="UVRABC SYSTEM PROTEIN B"/>
    <property type="match status" value="1"/>
</dbReference>
<dbReference type="Pfam" id="PF00271">
    <property type="entry name" value="Helicase_C"/>
    <property type="match status" value="1"/>
</dbReference>
<dbReference type="Pfam" id="PF04851">
    <property type="entry name" value="ResIII"/>
    <property type="match status" value="1"/>
</dbReference>
<dbReference type="Pfam" id="PF02151">
    <property type="entry name" value="UVR"/>
    <property type="match status" value="1"/>
</dbReference>
<dbReference type="Pfam" id="PF12344">
    <property type="entry name" value="UvrB"/>
    <property type="match status" value="1"/>
</dbReference>
<dbReference type="Pfam" id="PF17757">
    <property type="entry name" value="UvrB_inter"/>
    <property type="match status" value="1"/>
</dbReference>
<dbReference type="SMART" id="SM00487">
    <property type="entry name" value="DEXDc"/>
    <property type="match status" value="1"/>
</dbReference>
<dbReference type="SMART" id="SM00490">
    <property type="entry name" value="HELICc"/>
    <property type="match status" value="1"/>
</dbReference>
<dbReference type="SUPFAM" id="SSF46600">
    <property type="entry name" value="C-terminal UvrC-binding domain of UvrB"/>
    <property type="match status" value="1"/>
</dbReference>
<dbReference type="SUPFAM" id="SSF52540">
    <property type="entry name" value="P-loop containing nucleoside triphosphate hydrolases"/>
    <property type="match status" value="2"/>
</dbReference>
<dbReference type="PROSITE" id="PS51192">
    <property type="entry name" value="HELICASE_ATP_BIND_1"/>
    <property type="match status" value="1"/>
</dbReference>
<dbReference type="PROSITE" id="PS51194">
    <property type="entry name" value="HELICASE_CTER"/>
    <property type="match status" value="1"/>
</dbReference>
<dbReference type="PROSITE" id="PS50151">
    <property type="entry name" value="UVR"/>
    <property type="match status" value="1"/>
</dbReference>
<evidence type="ECO:0000255" key="1">
    <source>
        <dbReference type="HAMAP-Rule" id="MF_00204"/>
    </source>
</evidence>
<evidence type="ECO:0000256" key="2">
    <source>
        <dbReference type="SAM" id="MobiDB-lite"/>
    </source>
</evidence>
<proteinExistence type="inferred from homology"/>
<sequence>MTHYHNPLNGRKVLNQQFVLQAPFLPCGDQPEAIRQLSRGILDGIPSQVLLGTTGSGKTFTMANVIANVNVPTLVLAHNKTLAAQLYQEFKAFFPENAVEYFISYYDYYQPEAYIARSDTYIEKSLLINDEIDKLRLSATRSILERRDTLIVSSISCIYGIGSPDNYSSMALILEVGKEYPRSQLSAQLVRMHYQASASPQRSAFRERGSVIDIFLAYESDLAVRLEFVNDTLVSIEYTDPLTMIPSHTVPSVTLYPGSHYVTPEAVREQAIRTIREELEQRLLFFEGRPVEQERLFQRTTHDIEMIKEIGFCKGIENYSRHFTGAAPGEPPTCLLDYFPEDFLLIIDESHQTLPQLRAMYRGDQSRKQSLVEYGFRLPSAFDNRPLTYEEARRYFRRVVYVSATPGELEVQESRGHIIEQIIRPTGIPDPLPEIRPATGQIDDLLEEIRQRLRKDQEKILVVSVTKKLAEDIAAFLAELGIAAAYLHSGIETAERTQILTDLRLGTIDVLIGVNLLREGIDLPEVSLVAILDADKEGFLRSSASLIQFCGRAARNVHGKVIFYADRITPSMDHMLKETERRRQIQLDYNKKHNITPKPIIKPILANPITKEGAQEDSRPETQSTEDLESSIKQYEEAMYKAAQDFQFDEAAKYRDLMNAAKRQLLFKQGEDGNSK</sequence>
<comment type="function">
    <text evidence="1">The UvrABC repair system catalyzes the recognition and processing of DNA lesions. A damage recognition complex composed of 2 UvrA and 2 UvrB subunits scans DNA for abnormalities. Upon binding of the UvrA(2)B(2) complex to a putative damaged site, the DNA wraps around one UvrB monomer. DNA wrap is dependent on ATP binding by UvrB and probably causes local melting of the DNA helix, facilitating insertion of UvrB beta-hairpin between the DNA strands. Then UvrB probes one DNA strand for the presence of a lesion. If a lesion is found the UvrA subunits dissociate and the UvrB-DNA preincision complex is formed. This complex is subsequently bound by UvrC and the second UvrB is released. If no lesion is found, the DNA wraps around the other UvrB subunit that will check the other stand for damage.</text>
</comment>
<comment type="subunit">
    <text evidence="1">Forms a heterotetramer with UvrA during the search for lesions. Interacts with UvrC in an incision complex.</text>
</comment>
<comment type="subcellular location">
    <subcellularLocation>
        <location evidence="1">Cytoplasm</location>
    </subcellularLocation>
</comment>
<comment type="domain">
    <text evidence="1">The beta-hairpin motif is involved in DNA binding.</text>
</comment>
<comment type="similarity">
    <text evidence="1">Belongs to the UvrB family.</text>
</comment>